<gene>
    <name evidence="1" type="primary">secB</name>
    <name type="ordered locus">SSPA3316</name>
</gene>
<comment type="function">
    <text evidence="1">One of the proteins required for the normal export of preproteins out of the cell cytoplasm. It is a molecular chaperone that binds to a subset of precursor proteins, maintaining them in a translocation-competent state. It also specifically binds to its receptor SecA.</text>
</comment>
<comment type="subunit">
    <text evidence="1">Homotetramer, a dimer of dimers. One homotetramer interacts with 1 SecA dimer.</text>
</comment>
<comment type="subcellular location">
    <subcellularLocation>
        <location evidence="1">Cytoplasm</location>
    </subcellularLocation>
</comment>
<comment type="similarity">
    <text evidence="1">Belongs to the SecB family.</text>
</comment>
<sequence>MSEQNNTEMAFQIQRIYTKDVSFEAPNAPHVFQKDWQPEVKLDLDTASSQLADDVYEVVLRVTVTASLGEETAFLCEVQQAGIFSISGIEGTQMAHCLGAYCPNILFPYARECITSLVSRGTFPQLNLAPVNFDALFMNYLQQQAGEGTEEHQDA</sequence>
<dbReference type="EMBL" id="FM200053">
    <property type="protein sequence ID" value="CAR61582.1"/>
    <property type="molecule type" value="Genomic_DNA"/>
</dbReference>
<dbReference type="RefSeq" id="WP_000003370.1">
    <property type="nucleotide sequence ID" value="NC_011147.1"/>
</dbReference>
<dbReference type="SMR" id="B5BHY4"/>
<dbReference type="KEGG" id="sek:SSPA3316"/>
<dbReference type="HOGENOM" id="CLU_111574_1_0_6"/>
<dbReference type="Proteomes" id="UP000001869">
    <property type="component" value="Chromosome"/>
</dbReference>
<dbReference type="GO" id="GO:0005737">
    <property type="term" value="C:cytoplasm"/>
    <property type="evidence" value="ECO:0007669"/>
    <property type="project" value="UniProtKB-SubCell"/>
</dbReference>
<dbReference type="GO" id="GO:0051082">
    <property type="term" value="F:unfolded protein binding"/>
    <property type="evidence" value="ECO:0007669"/>
    <property type="project" value="InterPro"/>
</dbReference>
<dbReference type="GO" id="GO:0006457">
    <property type="term" value="P:protein folding"/>
    <property type="evidence" value="ECO:0007669"/>
    <property type="project" value="UniProtKB-UniRule"/>
</dbReference>
<dbReference type="GO" id="GO:0051262">
    <property type="term" value="P:protein tetramerization"/>
    <property type="evidence" value="ECO:0007669"/>
    <property type="project" value="InterPro"/>
</dbReference>
<dbReference type="GO" id="GO:0015031">
    <property type="term" value="P:protein transport"/>
    <property type="evidence" value="ECO:0007669"/>
    <property type="project" value="UniProtKB-UniRule"/>
</dbReference>
<dbReference type="CDD" id="cd00557">
    <property type="entry name" value="Translocase_SecB"/>
    <property type="match status" value="1"/>
</dbReference>
<dbReference type="FunFam" id="3.10.420.10:FF:000001">
    <property type="entry name" value="Protein-export chaperone SecB"/>
    <property type="match status" value="1"/>
</dbReference>
<dbReference type="Gene3D" id="3.10.420.10">
    <property type="entry name" value="SecB-like"/>
    <property type="match status" value="1"/>
</dbReference>
<dbReference type="HAMAP" id="MF_00821">
    <property type="entry name" value="SecB"/>
    <property type="match status" value="1"/>
</dbReference>
<dbReference type="InterPro" id="IPR003708">
    <property type="entry name" value="SecB"/>
</dbReference>
<dbReference type="InterPro" id="IPR035958">
    <property type="entry name" value="SecB-like_sf"/>
</dbReference>
<dbReference type="NCBIfam" id="NF004390">
    <property type="entry name" value="PRK05751.1-1"/>
    <property type="match status" value="1"/>
</dbReference>
<dbReference type="NCBIfam" id="NF004393">
    <property type="entry name" value="PRK05751.1-4"/>
    <property type="match status" value="1"/>
</dbReference>
<dbReference type="NCBIfam" id="TIGR00809">
    <property type="entry name" value="secB"/>
    <property type="match status" value="1"/>
</dbReference>
<dbReference type="PANTHER" id="PTHR36918">
    <property type="match status" value="1"/>
</dbReference>
<dbReference type="PANTHER" id="PTHR36918:SF1">
    <property type="entry name" value="PROTEIN-EXPORT PROTEIN SECB"/>
    <property type="match status" value="1"/>
</dbReference>
<dbReference type="Pfam" id="PF02556">
    <property type="entry name" value="SecB"/>
    <property type="match status" value="1"/>
</dbReference>
<dbReference type="PRINTS" id="PR01594">
    <property type="entry name" value="SECBCHAPRONE"/>
</dbReference>
<dbReference type="SUPFAM" id="SSF54611">
    <property type="entry name" value="SecB-like"/>
    <property type="match status" value="1"/>
</dbReference>
<keyword id="KW-0143">Chaperone</keyword>
<keyword id="KW-0963">Cytoplasm</keyword>
<keyword id="KW-0653">Protein transport</keyword>
<keyword id="KW-0811">Translocation</keyword>
<keyword id="KW-0813">Transport</keyword>
<protein>
    <recommendedName>
        <fullName evidence="1">Protein-export protein SecB</fullName>
    </recommendedName>
</protein>
<organism>
    <name type="scientific">Salmonella paratyphi A (strain AKU_12601)</name>
    <dbReference type="NCBI Taxonomy" id="554290"/>
    <lineage>
        <taxon>Bacteria</taxon>
        <taxon>Pseudomonadati</taxon>
        <taxon>Pseudomonadota</taxon>
        <taxon>Gammaproteobacteria</taxon>
        <taxon>Enterobacterales</taxon>
        <taxon>Enterobacteriaceae</taxon>
        <taxon>Salmonella</taxon>
    </lineage>
</organism>
<reference key="1">
    <citation type="journal article" date="2009" name="BMC Genomics">
        <title>Pseudogene accumulation in the evolutionary histories of Salmonella enterica serovars Paratyphi A and Typhi.</title>
        <authorList>
            <person name="Holt K.E."/>
            <person name="Thomson N.R."/>
            <person name="Wain J."/>
            <person name="Langridge G.C."/>
            <person name="Hasan R."/>
            <person name="Bhutta Z.A."/>
            <person name="Quail M.A."/>
            <person name="Norbertczak H."/>
            <person name="Walker D."/>
            <person name="Simmonds M."/>
            <person name="White B."/>
            <person name="Bason N."/>
            <person name="Mungall K."/>
            <person name="Dougan G."/>
            <person name="Parkhill J."/>
        </authorList>
    </citation>
    <scope>NUCLEOTIDE SEQUENCE [LARGE SCALE GENOMIC DNA]</scope>
    <source>
        <strain>AKU_12601</strain>
    </source>
</reference>
<proteinExistence type="inferred from homology"/>
<accession>B5BHY4</accession>
<name>SECB_SALPK</name>
<feature type="chain" id="PRO_1000195345" description="Protein-export protein SecB">
    <location>
        <begin position="1"/>
        <end position="155"/>
    </location>
</feature>
<evidence type="ECO:0000255" key="1">
    <source>
        <dbReference type="HAMAP-Rule" id="MF_00821"/>
    </source>
</evidence>